<keyword id="KW-0474">Menaquinone biosynthesis</keyword>
<keyword id="KW-0489">Methyltransferase</keyword>
<keyword id="KW-1185">Reference proteome</keyword>
<keyword id="KW-0949">S-adenosyl-L-methionine</keyword>
<keyword id="KW-0808">Transferase</keyword>
<sequence length="231" mass="25070">MSRAALDKDPRDVASMFDGVARRYDLTNTVLSLGQDRYWRRATRSALRIGPGDKVLDLAAGTAVSTVELAKSGAWCVAADFSVGMLAAGHERKVCKVAGDATRLPFADDVFDAVTISFGLRNVVDFSAALREMARVTRPGGRLVVCEFSTPVSALFATVYKEYLMRALPRVARAVSSNPEAYVYLAESIRAWPDQAALAQQMSRAGWSAVRWRNLTGGIVALHAGYKPQPV</sequence>
<gene>
    <name evidence="1" type="primary">menG</name>
    <name type="ordered locus">MMAR_0907</name>
</gene>
<dbReference type="EC" id="2.1.1.163" evidence="1"/>
<dbReference type="EMBL" id="CP000854">
    <property type="protein sequence ID" value="ACC39364.1"/>
    <property type="molecule type" value="Genomic_DNA"/>
</dbReference>
<dbReference type="RefSeq" id="WP_012392831.1">
    <property type="nucleotide sequence ID" value="NC_010612.1"/>
</dbReference>
<dbReference type="SMR" id="B2HRQ2"/>
<dbReference type="STRING" id="216594.MMAR_0907"/>
<dbReference type="GeneID" id="34339293"/>
<dbReference type="KEGG" id="mmi:MMAR_0907"/>
<dbReference type="eggNOG" id="COG2226">
    <property type="taxonomic scope" value="Bacteria"/>
</dbReference>
<dbReference type="HOGENOM" id="CLU_037990_0_0_11"/>
<dbReference type="OrthoDB" id="9808140at2"/>
<dbReference type="UniPathway" id="UPA00079">
    <property type="reaction ID" value="UER00169"/>
</dbReference>
<dbReference type="Proteomes" id="UP000001190">
    <property type="component" value="Chromosome"/>
</dbReference>
<dbReference type="GO" id="GO:0043770">
    <property type="term" value="F:demethylmenaquinone methyltransferase activity"/>
    <property type="evidence" value="ECO:0007669"/>
    <property type="project" value="UniProtKB-UniRule"/>
</dbReference>
<dbReference type="GO" id="GO:0009234">
    <property type="term" value="P:menaquinone biosynthetic process"/>
    <property type="evidence" value="ECO:0007669"/>
    <property type="project" value="UniProtKB-UniRule"/>
</dbReference>
<dbReference type="GO" id="GO:0032259">
    <property type="term" value="P:methylation"/>
    <property type="evidence" value="ECO:0007669"/>
    <property type="project" value="UniProtKB-KW"/>
</dbReference>
<dbReference type="CDD" id="cd02440">
    <property type="entry name" value="AdoMet_MTases"/>
    <property type="match status" value="1"/>
</dbReference>
<dbReference type="Gene3D" id="3.40.50.150">
    <property type="entry name" value="Vaccinia Virus protein VP39"/>
    <property type="match status" value="1"/>
</dbReference>
<dbReference type="HAMAP" id="MF_01813">
    <property type="entry name" value="MenG_UbiE_methyltr"/>
    <property type="match status" value="1"/>
</dbReference>
<dbReference type="InterPro" id="IPR029063">
    <property type="entry name" value="SAM-dependent_MTases_sf"/>
</dbReference>
<dbReference type="InterPro" id="IPR004033">
    <property type="entry name" value="UbiE/COQ5_MeTrFase"/>
</dbReference>
<dbReference type="InterPro" id="IPR023576">
    <property type="entry name" value="UbiE/COQ5_MeTrFase_CS"/>
</dbReference>
<dbReference type="NCBIfam" id="TIGR01934">
    <property type="entry name" value="MenG_MenH_UbiE"/>
    <property type="match status" value="1"/>
</dbReference>
<dbReference type="NCBIfam" id="NF001241">
    <property type="entry name" value="PRK00216.1-2"/>
    <property type="match status" value="1"/>
</dbReference>
<dbReference type="PANTHER" id="PTHR43591:SF24">
    <property type="entry name" value="2-METHOXY-6-POLYPRENYL-1,4-BENZOQUINOL METHYLASE, MITOCHONDRIAL"/>
    <property type="match status" value="1"/>
</dbReference>
<dbReference type="PANTHER" id="PTHR43591">
    <property type="entry name" value="METHYLTRANSFERASE"/>
    <property type="match status" value="1"/>
</dbReference>
<dbReference type="Pfam" id="PF01209">
    <property type="entry name" value="Ubie_methyltran"/>
    <property type="match status" value="1"/>
</dbReference>
<dbReference type="SUPFAM" id="SSF53335">
    <property type="entry name" value="S-adenosyl-L-methionine-dependent methyltransferases"/>
    <property type="match status" value="1"/>
</dbReference>
<dbReference type="PROSITE" id="PS51608">
    <property type="entry name" value="SAM_MT_UBIE"/>
    <property type="match status" value="1"/>
</dbReference>
<dbReference type="PROSITE" id="PS01183">
    <property type="entry name" value="UBIE_1"/>
    <property type="match status" value="1"/>
</dbReference>
<dbReference type="PROSITE" id="PS01184">
    <property type="entry name" value="UBIE_2"/>
    <property type="match status" value="1"/>
</dbReference>
<reference key="1">
    <citation type="journal article" date="2008" name="Genome Res.">
        <title>Insights from the complete genome sequence of Mycobacterium marinum on the evolution of Mycobacterium tuberculosis.</title>
        <authorList>
            <person name="Stinear T.P."/>
            <person name="Seemann T."/>
            <person name="Harrison P.F."/>
            <person name="Jenkin G.A."/>
            <person name="Davies J.K."/>
            <person name="Johnson P.D."/>
            <person name="Abdellah Z."/>
            <person name="Arrowsmith C."/>
            <person name="Chillingworth T."/>
            <person name="Churcher C."/>
            <person name="Clarke K."/>
            <person name="Cronin A."/>
            <person name="Davis P."/>
            <person name="Goodhead I."/>
            <person name="Holroyd N."/>
            <person name="Jagels K."/>
            <person name="Lord A."/>
            <person name="Moule S."/>
            <person name="Mungall K."/>
            <person name="Norbertczak H."/>
            <person name="Quail M.A."/>
            <person name="Rabbinowitsch E."/>
            <person name="Walker D."/>
            <person name="White B."/>
            <person name="Whitehead S."/>
            <person name="Small P.L."/>
            <person name="Brosch R."/>
            <person name="Ramakrishnan L."/>
            <person name="Fischbach M.A."/>
            <person name="Parkhill J."/>
            <person name="Cole S.T."/>
        </authorList>
    </citation>
    <scope>NUCLEOTIDE SEQUENCE [LARGE SCALE GENOMIC DNA]</scope>
    <source>
        <strain>ATCC BAA-535 / M</strain>
    </source>
</reference>
<proteinExistence type="inferred from homology"/>
<organism>
    <name type="scientific">Mycobacterium marinum (strain ATCC BAA-535 / M)</name>
    <dbReference type="NCBI Taxonomy" id="216594"/>
    <lineage>
        <taxon>Bacteria</taxon>
        <taxon>Bacillati</taxon>
        <taxon>Actinomycetota</taxon>
        <taxon>Actinomycetes</taxon>
        <taxon>Mycobacteriales</taxon>
        <taxon>Mycobacteriaceae</taxon>
        <taxon>Mycobacterium</taxon>
        <taxon>Mycobacterium ulcerans group</taxon>
    </lineage>
</organism>
<protein>
    <recommendedName>
        <fullName evidence="1">Demethylmenaquinone methyltransferase</fullName>
        <ecNumber evidence="1">2.1.1.163</ecNumber>
    </recommendedName>
</protein>
<feature type="chain" id="PRO_1000187780" description="Demethylmenaquinone methyltransferase">
    <location>
        <begin position="1"/>
        <end position="231"/>
    </location>
</feature>
<feature type="binding site" evidence="1">
    <location>
        <position position="62"/>
    </location>
    <ligand>
        <name>S-adenosyl-L-methionine</name>
        <dbReference type="ChEBI" id="CHEBI:59789"/>
    </ligand>
</feature>
<feature type="binding site" evidence="1">
    <location>
        <position position="80"/>
    </location>
    <ligand>
        <name>S-adenosyl-L-methionine</name>
        <dbReference type="ChEBI" id="CHEBI:59789"/>
    </ligand>
</feature>
<feature type="binding site" evidence="1">
    <location>
        <begin position="100"/>
        <end position="101"/>
    </location>
    <ligand>
        <name>S-adenosyl-L-methionine</name>
        <dbReference type="ChEBI" id="CHEBI:59789"/>
    </ligand>
</feature>
<feature type="binding site" evidence="1">
    <location>
        <position position="117"/>
    </location>
    <ligand>
        <name>S-adenosyl-L-methionine</name>
        <dbReference type="ChEBI" id="CHEBI:59789"/>
    </ligand>
</feature>
<comment type="function">
    <text evidence="1">Methyltransferase required for the conversion of demethylmenaquinol (DMKH2) to menaquinol (MKH2).</text>
</comment>
<comment type="catalytic activity">
    <reaction evidence="1">
        <text>a 2-demethylmenaquinol + S-adenosyl-L-methionine = a menaquinol + S-adenosyl-L-homocysteine + H(+)</text>
        <dbReference type="Rhea" id="RHEA:42640"/>
        <dbReference type="Rhea" id="RHEA-COMP:9539"/>
        <dbReference type="Rhea" id="RHEA-COMP:9563"/>
        <dbReference type="ChEBI" id="CHEBI:15378"/>
        <dbReference type="ChEBI" id="CHEBI:18151"/>
        <dbReference type="ChEBI" id="CHEBI:55437"/>
        <dbReference type="ChEBI" id="CHEBI:57856"/>
        <dbReference type="ChEBI" id="CHEBI:59789"/>
        <dbReference type="EC" id="2.1.1.163"/>
    </reaction>
</comment>
<comment type="pathway">
    <text evidence="1">Quinol/quinone metabolism; menaquinone biosynthesis; menaquinol from 1,4-dihydroxy-2-naphthoate: step 2/2.</text>
</comment>
<comment type="similarity">
    <text evidence="1">Belongs to the class I-like SAM-binding methyltransferase superfamily. MenG/UbiE family.</text>
</comment>
<name>MENG_MYCMM</name>
<accession>B2HRQ2</accession>
<evidence type="ECO:0000255" key="1">
    <source>
        <dbReference type="HAMAP-Rule" id="MF_01813"/>
    </source>
</evidence>